<reference key="1">
    <citation type="journal article" date="1998" name="Nature">
        <title>The genome sequence of Rickettsia prowazekii and the origin of mitochondria.</title>
        <authorList>
            <person name="Andersson S.G.E."/>
            <person name="Zomorodipour A."/>
            <person name="Andersson J.O."/>
            <person name="Sicheritz-Ponten T."/>
            <person name="Alsmark U.C.M."/>
            <person name="Podowski R.M."/>
            <person name="Naeslund A.K."/>
            <person name="Eriksson A.-S."/>
            <person name="Winkler H.H."/>
            <person name="Kurland C.G."/>
        </authorList>
    </citation>
    <scope>NUCLEOTIDE SEQUENCE [LARGE SCALE GENOMIC DNA]</scope>
    <source>
        <strain>Madrid E</strain>
    </source>
</reference>
<sequence length="95" mass="10557">MLKSNNASETATSKGVDKAAKKVFFRRRKGCPLSVPNAPVIDYKNPELLIKFVSEGGRMLPSRITNVCAKKQRKLNNAIKIARILALLPFVFQAK</sequence>
<dbReference type="EMBL" id="AJ235270">
    <property type="protein sequence ID" value="CAA14511.1"/>
    <property type="molecule type" value="Genomic_DNA"/>
</dbReference>
<dbReference type="PIR" id="H71711">
    <property type="entry name" value="H71711"/>
</dbReference>
<dbReference type="RefSeq" id="NP_220434.1">
    <property type="nucleotide sequence ID" value="NC_000963.1"/>
</dbReference>
<dbReference type="RefSeq" id="WP_004596642.1">
    <property type="nucleotide sequence ID" value="NC_000963.1"/>
</dbReference>
<dbReference type="SMR" id="Q9ZEA5"/>
<dbReference type="STRING" id="272947.gene:17555123"/>
<dbReference type="EnsemblBacteria" id="CAA14511">
    <property type="protein sequence ID" value="CAA14511"/>
    <property type="gene ID" value="CAA14511"/>
</dbReference>
<dbReference type="GeneID" id="57569168"/>
<dbReference type="KEGG" id="rpr:RP040"/>
<dbReference type="PATRIC" id="fig|272947.5.peg.41"/>
<dbReference type="eggNOG" id="COG0238">
    <property type="taxonomic scope" value="Bacteria"/>
</dbReference>
<dbReference type="HOGENOM" id="CLU_148710_2_1_5"/>
<dbReference type="OrthoDB" id="9812008at2"/>
<dbReference type="Proteomes" id="UP000002480">
    <property type="component" value="Chromosome"/>
</dbReference>
<dbReference type="GO" id="GO:0022627">
    <property type="term" value="C:cytosolic small ribosomal subunit"/>
    <property type="evidence" value="ECO:0007669"/>
    <property type="project" value="TreeGrafter"/>
</dbReference>
<dbReference type="GO" id="GO:0070181">
    <property type="term" value="F:small ribosomal subunit rRNA binding"/>
    <property type="evidence" value="ECO:0007669"/>
    <property type="project" value="TreeGrafter"/>
</dbReference>
<dbReference type="GO" id="GO:0003735">
    <property type="term" value="F:structural constituent of ribosome"/>
    <property type="evidence" value="ECO:0007669"/>
    <property type="project" value="InterPro"/>
</dbReference>
<dbReference type="GO" id="GO:0006412">
    <property type="term" value="P:translation"/>
    <property type="evidence" value="ECO:0007669"/>
    <property type="project" value="UniProtKB-UniRule"/>
</dbReference>
<dbReference type="Gene3D" id="4.10.640.10">
    <property type="entry name" value="Ribosomal protein S18"/>
    <property type="match status" value="1"/>
</dbReference>
<dbReference type="HAMAP" id="MF_00270">
    <property type="entry name" value="Ribosomal_bS18"/>
    <property type="match status" value="1"/>
</dbReference>
<dbReference type="InterPro" id="IPR001648">
    <property type="entry name" value="Ribosomal_bS18"/>
</dbReference>
<dbReference type="InterPro" id="IPR018275">
    <property type="entry name" value="Ribosomal_bS18_CS"/>
</dbReference>
<dbReference type="InterPro" id="IPR036870">
    <property type="entry name" value="Ribosomal_bS18_sf"/>
</dbReference>
<dbReference type="NCBIfam" id="TIGR00165">
    <property type="entry name" value="S18"/>
    <property type="match status" value="1"/>
</dbReference>
<dbReference type="PANTHER" id="PTHR13479">
    <property type="entry name" value="30S RIBOSOMAL PROTEIN S18"/>
    <property type="match status" value="1"/>
</dbReference>
<dbReference type="PANTHER" id="PTHR13479:SF40">
    <property type="entry name" value="SMALL RIBOSOMAL SUBUNIT PROTEIN BS18M"/>
    <property type="match status" value="1"/>
</dbReference>
<dbReference type="Pfam" id="PF01084">
    <property type="entry name" value="Ribosomal_S18"/>
    <property type="match status" value="1"/>
</dbReference>
<dbReference type="PRINTS" id="PR00974">
    <property type="entry name" value="RIBOSOMALS18"/>
</dbReference>
<dbReference type="SUPFAM" id="SSF46911">
    <property type="entry name" value="Ribosomal protein S18"/>
    <property type="match status" value="1"/>
</dbReference>
<dbReference type="PROSITE" id="PS00057">
    <property type="entry name" value="RIBOSOMAL_S18"/>
    <property type="match status" value="1"/>
</dbReference>
<feature type="chain" id="PRO_0000111218" description="Small ribosomal subunit protein bS18">
    <location>
        <begin position="1"/>
        <end position="95"/>
    </location>
</feature>
<comment type="function">
    <text evidence="1">Binds as a heterodimer with protein bS6 to the central domain of the 16S rRNA, where it helps stabilize the platform of the 30S subunit.</text>
</comment>
<comment type="subunit">
    <text evidence="1">Part of the 30S ribosomal subunit. Forms a tight heterodimer with protein bS6.</text>
</comment>
<comment type="similarity">
    <text evidence="1">Belongs to the bacterial ribosomal protein bS18 family.</text>
</comment>
<gene>
    <name evidence="1" type="primary">rpsR</name>
    <name type="ordered locus">RP040</name>
</gene>
<protein>
    <recommendedName>
        <fullName evidence="1">Small ribosomal subunit protein bS18</fullName>
    </recommendedName>
    <alternativeName>
        <fullName evidence="2">30S ribosomal protein S18</fullName>
    </alternativeName>
</protein>
<keyword id="KW-1185">Reference proteome</keyword>
<keyword id="KW-0687">Ribonucleoprotein</keyword>
<keyword id="KW-0689">Ribosomal protein</keyword>
<keyword id="KW-0694">RNA-binding</keyword>
<keyword id="KW-0699">rRNA-binding</keyword>
<name>RS18_RICPR</name>
<organism>
    <name type="scientific">Rickettsia prowazekii (strain Madrid E)</name>
    <dbReference type="NCBI Taxonomy" id="272947"/>
    <lineage>
        <taxon>Bacteria</taxon>
        <taxon>Pseudomonadati</taxon>
        <taxon>Pseudomonadota</taxon>
        <taxon>Alphaproteobacteria</taxon>
        <taxon>Rickettsiales</taxon>
        <taxon>Rickettsiaceae</taxon>
        <taxon>Rickettsieae</taxon>
        <taxon>Rickettsia</taxon>
        <taxon>typhus group</taxon>
    </lineage>
</organism>
<evidence type="ECO:0000255" key="1">
    <source>
        <dbReference type="HAMAP-Rule" id="MF_00270"/>
    </source>
</evidence>
<evidence type="ECO:0000305" key="2"/>
<proteinExistence type="inferred from homology"/>
<accession>Q9ZEA5</accession>